<dbReference type="EMBL" id="CP000239">
    <property type="protein sequence ID" value="ABD00331.1"/>
    <property type="molecule type" value="Genomic_DNA"/>
</dbReference>
<dbReference type="RefSeq" id="WP_011431004.1">
    <property type="nucleotide sequence ID" value="NC_007775.1"/>
</dbReference>
<dbReference type="SMR" id="Q2JSN8"/>
<dbReference type="STRING" id="321327.CYA_2192"/>
<dbReference type="KEGG" id="cya:CYA_2192"/>
<dbReference type="eggNOG" id="COG1970">
    <property type="taxonomic scope" value="Bacteria"/>
</dbReference>
<dbReference type="HOGENOM" id="CLU_095787_0_0_3"/>
<dbReference type="OrthoDB" id="9810350at2"/>
<dbReference type="Proteomes" id="UP000008818">
    <property type="component" value="Chromosome"/>
</dbReference>
<dbReference type="GO" id="GO:0005886">
    <property type="term" value="C:plasma membrane"/>
    <property type="evidence" value="ECO:0007669"/>
    <property type="project" value="UniProtKB-SubCell"/>
</dbReference>
<dbReference type="GO" id="GO:0008381">
    <property type="term" value="F:mechanosensitive monoatomic ion channel activity"/>
    <property type="evidence" value="ECO:0007669"/>
    <property type="project" value="UniProtKB-UniRule"/>
</dbReference>
<dbReference type="Gene3D" id="1.10.1200.120">
    <property type="entry name" value="Large-conductance mechanosensitive channel, MscL, domain 1"/>
    <property type="match status" value="1"/>
</dbReference>
<dbReference type="HAMAP" id="MF_00115">
    <property type="entry name" value="MscL"/>
    <property type="match status" value="1"/>
</dbReference>
<dbReference type="InterPro" id="IPR001185">
    <property type="entry name" value="MS_channel"/>
</dbReference>
<dbReference type="InterPro" id="IPR037673">
    <property type="entry name" value="MSC/AndL"/>
</dbReference>
<dbReference type="InterPro" id="IPR036019">
    <property type="entry name" value="MscL_channel"/>
</dbReference>
<dbReference type="NCBIfam" id="TIGR00220">
    <property type="entry name" value="mscL"/>
    <property type="match status" value="1"/>
</dbReference>
<dbReference type="NCBIfam" id="NF001843">
    <property type="entry name" value="PRK00567.1-4"/>
    <property type="match status" value="1"/>
</dbReference>
<dbReference type="PANTHER" id="PTHR30266:SF2">
    <property type="entry name" value="LARGE-CONDUCTANCE MECHANOSENSITIVE CHANNEL"/>
    <property type="match status" value="1"/>
</dbReference>
<dbReference type="PANTHER" id="PTHR30266">
    <property type="entry name" value="MECHANOSENSITIVE CHANNEL MSCL"/>
    <property type="match status" value="1"/>
</dbReference>
<dbReference type="Pfam" id="PF01741">
    <property type="entry name" value="MscL"/>
    <property type="match status" value="1"/>
</dbReference>
<dbReference type="PRINTS" id="PR01264">
    <property type="entry name" value="MECHCHANNEL"/>
</dbReference>
<dbReference type="SUPFAM" id="SSF81330">
    <property type="entry name" value="Gated mechanosensitive channel"/>
    <property type="match status" value="1"/>
</dbReference>
<proteinExistence type="inferred from homology"/>
<accession>Q2JSN8</accession>
<evidence type="ECO:0000255" key="1">
    <source>
        <dbReference type="HAMAP-Rule" id="MF_00115"/>
    </source>
</evidence>
<protein>
    <recommendedName>
        <fullName evidence="1">Large-conductance mechanosensitive channel</fullName>
    </recommendedName>
</protein>
<organism>
    <name type="scientific">Synechococcus sp. (strain JA-3-3Ab)</name>
    <name type="common">Cyanobacteria bacterium Yellowstone A-Prime</name>
    <dbReference type="NCBI Taxonomy" id="321327"/>
    <lineage>
        <taxon>Bacteria</taxon>
        <taxon>Bacillati</taxon>
        <taxon>Cyanobacteriota</taxon>
        <taxon>Cyanophyceae</taxon>
        <taxon>Synechococcales</taxon>
        <taxon>Synechococcaceae</taxon>
        <taxon>Synechococcus</taxon>
    </lineage>
</organism>
<feature type="chain" id="PRO_0000238044" description="Large-conductance mechanosensitive channel">
    <location>
        <begin position="1"/>
        <end position="132"/>
    </location>
</feature>
<feature type="transmembrane region" description="Helical" evidence="1">
    <location>
        <begin position="11"/>
        <end position="31"/>
    </location>
</feature>
<feature type="transmembrane region" description="Helical" evidence="1">
    <location>
        <begin position="75"/>
        <end position="95"/>
    </location>
</feature>
<sequence length="132" mass="14478">MRAFLEEFKKFISRGNALDLAVGVVIGGAFGKIVTSFVADLFTPVLGLMIGGVSFQNLVWKIGGSPEDPVTINYGSFLQAVFDFVIIAFAIFLLVKAINTLQRKEEESPPTLPPPEVVLLTEIRDILNRHSQ</sequence>
<reference key="1">
    <citation type="journal article" date="2007" name="ISME J.">
        <title>Population level functional diversity in a microbial community revealed by comparative genomic and metagenomic analyses.</title>
        <authorList>
            <person name="Bhaya D."/>
            <person name="Grossman A.R."/>
            <person name="Steunou A.-S."/>
            <person name="Khuri N."/>
            <person name="Cohan F.M."/>
            <person name="Hamamura N."/>
            <person name="Melendrez M.C."/>
            <person name="Bateson M.M."/>
            <person name="Ward D.M."/>
            <person name="Heidelberg J.F."/>
        </authorList>
    </citation>
    <scope>NUCLEOTIDE SEQUENCE [LARGE SCALE GENOMIC DNA]</scope>
    <source>
        <strain>JA-3-3Ab</strain>
    </source>
</reference>
<comment type="function">
    <text evidence="1">Channel that opens in response to stretch forces in the membrane lipid bilayer. May participate in the regulation of osmotic pressure changes within the cell.</text>
</comment>
<comment type="subunit">
    <text evidence="1">Homopentamer.</text>
</comment>
<comment type="subcellular location">
    <subcellularLocation>
        <location evidence="1">Cell inner membrane</location>
        <topology evidence="1">Multi-pass membrane protein</topology>
    </subcellularLocation>
</comment>
<comment type="similarity">
    <text evidence="1">Belongs to the MscL family.</text>
</comment>
<gene>
    <name evidence="1" type="primary">mscL</name>
    <name type="ordered locus">CYA_2192</name>
</gene>
<keyword id="KW-0997">Cell inner membrane</keyword>
<keyword id="KW-1003">Cell membrane</keyword>
<keyword id="KW-0407">Ion channel</keyword>
<keyword id="KW-0406">Ion transport</keyword>
<keyword id="KW-0472">Membrane</keyword>
<keyword id="KW-0812">Transmembrane</keyword>
<keyword id="KW-1133">Transmembrane helix</keyword>
<keyword id="KW-0813">Transport</keyword>
<name>MSCL_SYNJA</name>